<proteinExistence type="inferred from homology"/>
<reference key="1">
    <citation type="journal article" date="2004" name="Nat. Genet.">
        <title>Reductive evolution suggested from the complete genome sequence of a plant-pathogenic phytoplasma.</title>
        <authorList>
            <person name="Oshima K."/>
            <person name="Kakizawa S."/>
            <person name="Nishigawa H."/>
            <person name="Jung H.-Y."/>
            <person name="Wei W."/>
            <person name="Suzuki S."/>
            <person name="Arashida R."/>
            <person name="Nakata D."/>
            <person name="Miyata S."/>
            <person name="Ugaki M."/>
            <person name="Namba S."/>
        </authorList>
    </citation>
    <scope>NUCLEOTIDE SEQUENCE [LARGE SCALE GENOMIC DNA]</scope>
    <source>
        <strain>OY-M</strain>
    </source>
</reference>
<keyword id="KW-0963">Cytoplasm</keyword>
<keyword id="KW-0489">Methyltransferase</keyword>
<keyword id="KW-0698">rRNA processing</keyword>
<keyword id="KW-0949">S-adenosyl-L-methionine</keyword>
<keyword id="KW-0808">Transferase</keyword>
<dbReference type="EC" id="2.1.1.-" evidence="1"/>
<dbReference type="EMBL" id="AP006628">
    <property type="protein sequence ID" value="BAD04352.1"/>
    <property type="molecule type" value="Genomic_DNA"/>
</dbReference>
<dbReference type="SMR" id="Q6YQV6"/>
<dbReference type="STRING" id="262768.PAM_267"/>
<dbReference type="KEGG" id="poy:PAM_267"/>
<dbReference type="eggNOG" id="COG0357">
    <property type="taxonomic scope" value="Bacteria"/>
</dbReference>
<dbReference type="HOGENOM" id="CLU_065341_0_0_14"/>
<dbReference type="BioCyc" id="OYEL262768:G1G26-324-MONOMER"/>
<dbReference type="Proteomes" id="UP000002523">
    <property type="component" value="Chromosome"/>
</dbReference>
<dbReference type="GO" id="GO:0005829">
    <property type="term" value="C:cytosol"/>
    <property type="evidence" value="ECO:0007669"/>
    <property type="project" value="TreeGrafter"/>
</dbReference>
<dbReference type="GO" id="GO:0070043">
    <property type="term" value="F:rRNA (guanine-N7-)-methyltransferase activity"/>
    <property type="evidence" value="ECO:0007669"/>
    <property type="project" value="UniProtKB-UniRule"/>
</dbReference>
<dbReference type="CDD" id="cd02440">
    <property type="entry name" value="AdoMet_MTases"/>
    <property type="match status" value="1"/>
</dbReference>
<dbReference type="Gene3D" id="3.40.50.150">
    <property type="entry name" value="Vaccinia Virus protein VP39"/>
    <property type="match status" value="1"/>
</dbReference>
<dbReference type="HAMAP" id="MF_00074">
    <property type="entry name" value="16SrRNA_methyltr_G"/>
    <property type="match status" value="1"/>
</dbReference>
<dbReference type="InterPro" id="IPR003682">
    <property type="entry name" value="rRNA_ssu_MeTfrase_G"/>
</dbReference>
<dbReference type="InterPro" id="IPR029063">
    <property type="entry name" value="SAM-dependent_MTases_sf"/>
</dbReference>
<dbReference type="NCBIfam" id="TIGR00138">
    <property type="entry name" value="rsmG_gidB"/>
    <property type="match status" value="1"/>
</dbReference>
<dbReference type="PANTHER" id="PTHR31760">
    <property type="entry name" value="S-ADENOSYL-L-METHIONINE-DEPENDENT METHYLTRANSFERASES SUPERFAMILY PROTEIN"/>
    <property type="match status" value="1"/>
</dbReference>
<dbReference type="PANTHER" id="PTHR31760:SF0">
    <property type="entry name" value="S-ADENOSYL-L-METHIONINE-DEPENDENT METHYLTRANSFERASES SUPERFAMILY PROTEIN"/>
    <property type="match status" value="1"/>
</dbReference>
<dbReference type="Pfam" id="PF02527">
    <property type="entry name" value="GidB"/>
    <property type="match status" value="1"/>
</dbReference>
<dbReference type="PIRSF" id="PIRSF003078">
    <property type="entry name" value="GidB"/>
    <property type="match status" value="1"/>
</dbReference>
<dbReference type="SUPFAM" id="SSF53335">
    <property type="entry name" value="S-adenosyl-L-methionine-dependent methyltransferases"/>
    <property type="match status" value="1"/>
</dbReference>
<feature type="chain" id="PRO_0000184297" description="Ribosomal RNA small subunit methyltransferase G">
    <location>
        <begin position="1"/>
        <end position="212"/>
    </location>
</feature>
<feature type="binding site" evidence="1">
    <location>
        <position position="78"/>
    </location>
    <ligand>
        <name>S-adenosyl-L-methionine</name>
        <dbReference type="ChEBI" id="CHEBI:59789"/>
    </ligand>
</feature>
<feature type="binding site" evidence="1">
    <location>
        <begin position="96"/>
        <end position="98"/>
    </location>
    <ligand>
        <name>S-adenosyl-L-methionine</name>
        <dbReference type="ChEBI" id="CHEBI:59789"/>
    </ligand>
</feature>
<feature type="binding site" evidence="1">
    <location>
        <begin position="124"/>
        <end position="125"/>
    </location>
    <ligand>
        <name>S-adenosyl-L-methionine</name>
        <dbReference type="ChEBI" id="CHEBI:59789"/>
    </ligand>
</feature>
<feature type="binding site" evidence="1">
    <location>
        <position position="141"/>
    </location>
    <ligand>
        <name>S-adenosyl-L-methionine</name>
        <dbReference type="ChEBI" id="CHEBI:59789"/>
    </ligand>
</feature>
<sequence>MLYFESLKDKFALNEKQLNKFVFYYEFLKQENQKMNLTSIISLSDVCYKHFYDSLILKEIFNFNTVTNLCDVDSGAGFPSFPLKILFPHLKIVIIESSLKKINFLKQLSSHLELDNICFFHQRVEQYDIAKNGSYDCVVARALARLELILKWCVPLVKKKGYFIAMKGKNFQQELEASKKIIKQIRVKLVSAKTLELPMQLGTRTNLLFQNE</sequence>
<name>RSMG_ONYPE</name>
<accession>Q6YQV6</accession>
<evidence type="ECO:0000255" key="1">
    <source>
        <dbReference type="HAMAP-Rule" id="MF_00074"/>
    </source>
</evidence>
<protein>
    <recommendedName>
        <fullName evidence="1">Ribosomal RNA small subunit methyltransferase G</fullName>
        <ecNumber evidence="1">2.1.1.-</ecNumber>
    </recommendedName>
    <alternativeName>
        <fullName evidence="1">16S rRNA 7-methylguanosine methyltransferase</fullName>
        <shortName evidence="1">16S rRNA m7G methyltransferase</shortName>
    </alternativeName>
</protein>
<gene>
    <name evidence="1" type="primary">rsmG</name>
    <name type="ordered locus">PAM_267</name>
</gene>
<comment type="function">
    <text evidence="1">Specifically methylates the N7 position of a guanine in 16S rRNA.</text>
</comment>
<comment type="subcellular location">
    <subcellularLocation>
        <location evidence="1">Cytoplasm</location>
    </subcellularLocation>
</comment>
<comment type="similarity">
    <text evidence="1">Belongs to the methyltransferase superfamily. RNA methyltransferase RsmG family.</text>
</comment>
<organism>
    <name type="scientific">Onion yellows phytoplasma (strain OY-M)</name>
    <dbReference type="NCBI Taxonomy" id="262768"/>
    <lineage>
        <taxon>Bacteria</taxon>
        <taxon>Bacillati</taxon>
        <taxon>Mycoplasmatota</taxon>
        <taxon>Mollicutes</taxon>
        <taxon>Acholeplasmatales</taxon>
        <taxon>Acholeplasmataceae</taxon>
        <taxon>Candidatus Phytoplasma</taxon>
        <taxon>16SrI (Aster yellows group)</taxon>
    </lineage>
</organism>